<dbReference type="EC" id="2.7.7.6" evidence="1"/>
<dbReference type="EMBL" id="CP000699">
    <property type="protein sequence ID" value="ABQ69814.1"/>
    <property type="molecule type" value="Genomic_DNA"/>
</dbReference>
<dbReference type="SMR" id="A5VBZ8"/>
<dbReference type="STRING" id="392499.Swit_3468"/>
<dbReference type="PaxDb" id="392499-Swit_3468"/>
<dbReference type="KEGG" id="swi:Swit_3468"/>
<dbReference type="eggNOG" id="COG0085">
    <property type="taxonomic scope" value="Bacteria"/>
</dbReference>
<dbReference type="HOGENOM" id="CLU_000524_4_0_5"/>
<dbReference type="OrthoDB" id="9803954at2"/>
<dbReference type="Proteomes" id="UP000001989">
    <property type="component" value="Chromosome"/>
</dbReference>
<dbReference type="GO" id="GO:0000428">
    <property type="term" value="C:DNA-directed RNA polymerase complex"/>
    <property type="evidence" value="ECO:0007669"/>
    <property type="project" value="UniProtKB-KW"/>
</dbReference>
<dbReference type="GO" id="GO:0003677">
    <property type="term" value="F:DNA binding"/>
    <property type="evidence" value="ECO:0007669"/>
    <property type="project" value="UniProtKB-UniRule"/>
</dbReference>
<dbReference type="GO" id="GO:0003899">
    <property type="term" value="F:DNA-directed RNA polymerase activity"/>
    <property type="evidence" value="ECO:0007669"/>
    <property type="project" value="UniProtKB-UniRule"/>
</dbReference>
<dbReference type="GO" id="GO:0032549">
    <property type="term" value="F:ribonucleoside binding"/>
    <property type="evidence" value="ECO:0007669"/>
    <property type="project" value="InterPro"/>
</dbReference>
<dbReference type="GO" id="GO:0006351">
    <property type="term" value="P:DNA-templated transcription"/>
    <property type="evidence" value="ECO:0007669"/>
    <property type="project" value="UniProtKB-UniRule"/>
</dbReference>
<dbReference type="CDD" id="cd00653">
    <property type="entry name" value="RNA_pol_B_RPB2"/>
    <property type="match status" value="1"/>
</dbReference>
<dbReference type="FunFam" id="3.90.1800.10:FF:000001">
    <property type="entry name" value="DNA-directed RNA polymerase subunit beta"/>
    <property type="match status" value="1"/>
</dbReference>
<dbReference type="Gene3D" id="2.40.50.100">
    <property type="match status" value="1"/>
</dbReference>
<dbReference type="Gene3D" id="2.40.50.150">
    <property type="match status" value="1"/>
</dbReference>
<dbReference type="Gene3D" id="3.90.1100.10">
    <property type="match status" value="2"/>
</dbReference>
<dbReference type="Gene3D" id="2.30.150.10">
    <property type="entry name" value="DNA-directed RNA polymerase, beta subunit, external 1 domain"/>
    <property type="match status" value="1"/>
</dbReference>
<dbReference type="Gene3D" id="2.40.270.10">
    <property type="entry name" value="DNA-directed RNA polymerase, subunit 2, domain 6"/>
    <property type="match status" value="1"/>
</dbReference>
<dbReference type="Gene3D" id="3.90.1800.10">
    <property type="entry name" value="RNA polymerase alpha subunit dimerisation domain"/>
    <property type="match status" value="1"/>
</dbReference>
<dbReference type="Gene3D" id="3.90.1110.10">
    <property type="entry name" value="RNA polymerase Rpb2, domain 2"/>
    <property type="match status" value="1"/>
</dbReference>
<dbReference type="HAMAP" id="MF_01321">
    <property type="entry name" value="RNApol_bact_RpoB"/>
    <property type="match status" value="1"/>
</dbReference>
<dbReference type="InterPro" id="IPR042107">
    <property type="entry name" value="DNA-dir_RNA_pol_bsu_ext_1_sf"/>
</dbReference>
<dbReference type="InterPro" id="IPR019462">
    <property type="entry name" value="DNA-dir_RNA_pol_bsu_external_1"/>
</dbReference>
<dbReference type="InterPro" id="IPR015712">
    <property type="entry name" value="DNA-dir_RNA_pol_su2"/>
</dbReference>
<dbReference type="InterPro" id="IPR007120">
    <property type="entry name" value="DNA-dir_RNAP_su2_dom"/>
</dbReference>
<dbReference type="InterPro" id="IPR037033">
    <property type="entry name" value="DNA-dir_RNAP_su2_hyb_sf"/>
</dbReference>
<dbReference type="InterPro" id="IPR010243">
    <property type="entry name" value="RNA_pol_bsu_bac"/>
</dbReference>
<dbReference type="InterPro" id="IPR007121">
    <property type="entry name" value="RNA_pol_bsu_CS"/>
</dbReference>
<dbReference type="InterPro" id="IPR007644">
    <property type="entry name" value="RNA_pol_bsu_protrusion"/>
</dbReference>
<dbReference type="InterPro" id="IPR007642">
    <property type="entry name" value="RNA_pol_Rpb2_2"/>
</dbReference>
<dbReference type="InterPro" id="IPR037034">
    <property type="entry name" value="RNA_pol_Rpb2_2_sf"/>
</dbReference>
<dbReference type="InterPro" id="IPR007645">
    <property type="entry name" value="RNA_pol_Rpb2_3"/>
</dbReference>
<dbReference type="InterPro" id="IPR007641">
    <property type="entry name" value="RNA_pol_Rpb2_7"/>
</dbReference>
<dbReference type="InterPro" id="IPR014724">
    <property type="entry name" value="RNA_pol_RPB2_OB-fold"/>
</dbReference>
<dbReference type="NCBIfam" id="NF001616">
    <property type="entry name" value="PRK00405.1"/>
    <property type="match status" value="1"/>
</dbReference>
<dbReference type="NCBIfam" id="TIGR02013">
    <property type="entry name" value="rpoB"/>
    <property type="match status" value="1"/>
</dbReference>
<dbReference type="PANTHER" id="PTHR20856">
    <property type="entry name" value="DNA-DIRECTED RNA POLYMERASE I SUBUNIT 2"/>
    <property type="match status" value="1"/>
</dbReference>
<dbReference type="Pfam" id="PF04563">
    <property type="entry name" value="RNA_pol_Rpb2_1"/>
    <property type="match status" value="1"/>
</dbReference>
<dbReference type="Pfam" id="PF04561">
    <property type="entry name" value="RNA_pol_Rpb2_2"/>
    <property type="match status" value="2"/>
</dbReference>
<dbReference type="Pfam" id="PF04565">
    <property type="entry name" value="RNA_pol_Rpb2_3"/>
    <property type="match status" value="1"/>
</dbReference>
<dbReference type="Pfam" id="PF10385">
    <property type="entry name" value="RNA_pol_Rpb2_45"/>
    <property type="match status" value="1"/>
</dbReference>
<dbReference type="Pfam" id="PF00562">
    <property type="entry name" value="RNA_pol_Rpb2_6"/>
    <property type="match status" value="1"/>
</dbReference>
<dbReference type="Pfam" id="PF04560">
    <property type="entry name" value="RNA_pol_Rpb2_7"/>
    <property type="match status" value="1"/>
</dbReference>
<dbReference type="SUPFAM" id="SSF64484">
    <property type="entry name" value="beta and beta-prime subunits of DNA dependent RNA-polymerase"/>
    <property type="match status" value="1"/>
</dbReference>
<dbReference type="PROSITE" id="PS01166">
    <property type="entry name" value="RNA_POL_BETA"/>
    <property type="match status" value="1"/>
</dbReference>
<protein>
    <recommendedName>
        <fullName evidence="1">DNA-directed RNA polymerase subunit beta</fullName>
        <shortName evidence="1">RNAP subunit beta</shortName>
        <ecNumber evidence="1">2.7.7.6</ecNumber>
    </recommendedName>
    <alternativeName>
        <fullName evidence="1">RNA polymerase subunit beta</fullName>
    </alternativeName>
    <alternativeName>
        <fullName evidence="1">Transcriptase subunit beta</fullName>
    </alternativeName>
</protein>
<feature type="chain" id="PRO_0000329189" description="DNA-directed RNA polymerase subunit beta">
    <location>
        <begin position="1"/>
        <end position="1455"/>
    </location>
</feature>
<gene>
    <name evidence="1" type="primary">rpoB</name>
    <name type="ordered locus">Swit_3468</name>
</gene>
<comment type="function">
    <text evidence="1">DNA-dependent RNA polymerase catalyzes the transcription of DNA into RNA using the four ribonucleoside triphosphates as substrates.</text>
</comment>
<comment type="catalytic activity">
    <reaction evidence="1">
        <text>RNA(n) + a ribonucleoside 5'-triphosphate = RNA(n+1) + diphosphate</text>
        <dbReference type="Rhea" id="RHEA:21248"/>
        <dbReference type="Rhea" id="RHEA-COMP:14527"/>
        <dbReference type="Rhea" id="RHEA-COMP:17342"/>
        <dbReference type="ChEBI" id="CHEBI:33019"/>
        <dbReference type="ChEBI" id="CHEBI:61557"/>
        <dbReference type="ChEBI" id="CHEBI:140395"/>
        <dbReference type="EC" id="2.7.7.6"/>
    </reaction>
</comment>
<comment type="subunit">
    <text evidence="1">The RNAP catalytic core consists of 2 alpha, 1 beta, 1 beta' and 1 omega subunit. When a sigma factor is associated with the core the holoenzyme is formed, which can initiate transcription.</text>
</comment>
<comment type="similarity">
    <text evidence="1">Belongs to the RNA polymerase beta chain family.</text>
</comment>
<sequence length="1455" mass="160894">MATQAVPATAKKRIRKVFGNIHEVVQMPNLIEVQRESYEQFLRSRPADGYVSGLEKTLRSVFPIRDFAGTAELDFVQYELEDPKYDTDECRQRGMTYAAPMRVTLRLIVFEVDPDTETRSVLDIKEQDVYMGDMPLMTENGTFLINGTERVIVSQMHRSPGVLFDHDRGKTHASGKYLFAARVIPYRGSWLDFEFDAKDIVNVRIDRKRKLPVTSLLRALGDAVIEVNPDKGKFEAGDIVAISGVNRACRVKAVAGRLVTVEDPTGAIIPGGLIQTAEGEKIGHVARIRLQGMSGEDILNYFYRTQRFVRGENGWKVPFVAENWRGQKPAFDVVNADTGEVVFPAGTKISPRAANKAGKDGLETLLIPTDQIFGRYSAYDLIDESTGRIYIEAGDEVTPENLEALDKAGFDHVDLLDIDHVSTGPWIRNTLKADKVEDRDHALSEIYRVMRPGEPPTKETAEALFAGLFFDSERYDLSAVGRVKLNMRLELDAEDTVTTLRSEDILAVVKTLVDLKDGKGEIDDIDNLGNRRVRSVGELLENQYRVGLLRMERAVKERMSSVDVSTAMPNDLINAKPAVAAVREFFGSSQLSQFMDQTNPLSEVTHKRRVSALGPGGLTRERAGFEVRDVHPTHYGRICPIETPEGPNIGLINSLASFSRVNKYGFIETPYRKIVDGKVTNEVVYLSAMEEAKHTIAQANAELDSEGRFVEDLISAREAGEFLMAPRDHVTLMDVSPKQLVSVAASLIPFLENDDANRALMGSNMQRQAVPLVRAEAPFVGTGMEETVARDSGAAIAAKRSGIVDQVDATRIVVRATGAVDAGKSGVDIYTLMKFQRSNQSTCINQRPLVKVGDVVNAGDIIADGPSTEFGELALGRNVLVAFMPWNGYNYEDSILISERIVKDDVFTSIHIDEFEVMARDTKLGPEDITRDIPNVGEEALRNLDEAGIVYIGAEVEPGDILCGKITPKGESPMTPEEKLLRAIFGEKASDVRDTSLRLPPGVSGTVVDVRVFNRHGIDKDERAMAIEREEIDRLTKDREDERAILNRANYARLKEMLLGQIATAAPKGIKKGSEINEELLAEVEKREWWKFAVQDDARQADLEAVKAQYDDAVGLIVKKFEDRVEKLQRGDELPPGVLKMVKVFVAVKRKLQPGDKMAGRHGNKGVISRILPQEDMPFLEDGTPVDIVLNPLGVPSRMNVGQIFETHLGWAARGLGKQVTSALEAWREANPDAQAATPPAAVVDRLKEVYGKEYHADIEGRSTDQIVEMAGLLKNGVPMATPVFDGAREADVAEMLRRAGLDESGQVELFDGRTGDQFDRKVTVGYIYMLKLHHLVDDKIHARSIGPYSLVTQQPLGGKAQFGGQRFGEMEVWALQAYGAAYTLQEMLTVKSDDVVGRTKVYEAIVKGDDTFEAGIPESFNVLVKEMRSLGLNVELSSIEDQSDDDDGLAEAAE</sequence>
<name>RPOB_RHIWR</name>
<evidence type="ECO:0000255" key="1">
    <source>
        <dbReference type="HAMAP-Rule" id="MF_01321"/>
    </source>
</evidence>
<keyword id="KW-0240">DNA-directed RNA polymerase</keyword>
<keyword id="KW-0548">Nucleotidyltransferase</keyword>
<keyword id="KW-1185">Reference proteome</keyword>
<keyword id="KW-0804">Transcription</keyword>
<keyword id="KW-0808">Transferase</keyword>
<accession>A5VBZ8</accession>
<proteinExistence type="inferred from homology"/>
<reference key="1">
    <citation type="journal article" date="2010" name="J. Bacteriol.">
        <title>Genome sequence of the dioxin-mineralizing bacterium Sphingomonas wittichii RW1.</title>
        <authorList>
            <person name="Miller T.R."/>
            <person name="Delcher A.L."/>
            <person name="Salzberg S.L."/>
            <person name="Saunders E."/>
            <person name="Detter J.C."/>
            <person name="Halden R.U."/>
        </authorList>
    </citation>
    <scope>NUCLEOTIDE SEQUENCE [LARGE SCALE GENOMIC DNA]</scope>
    <source>
        <strain>DSM 6014 / CCUG 31198 / JCM 15750 / NBRC 105917 / EY 4224 / RW1</strain>
    </source>
</reference>
<organism>
    <name type="scientific">Rhizorhabdus wittichii (strain DSM 6014 / CCUG 31198 / JCM 15750 / NBRC 105917 / EY 4224 / RW1)</name>
    <name type="common">Sphingomonas wittichii</name>
    <dbReference type="NCBI Taxonomy" id="392499"/>
    <lineage>
        <taxon>Bacteria</taxon>
        <taxon>Pseudomonadati</taxon>
        <taxon>Pseudomonadota</taxon>
        <taxon>Alphaproteobacteria</taxon>
        <taxon>Sphingomonadales</taxon>
        <taxon>Sphingomonadaceae</taxon>
        <taxon>Rhizorhabdus</taxon>
    </lineage>
</organism>